<protein>
    <recommendedName>
        <fullName evidence="1">Transcription antitermination protein NusB</fullName>
    </recommendedName>
    <alternativeName>
        <fullName evidence="1">Antitermination factor NusB</fullName>
    </alternativeName>
</protein>
<feature type="chain" id="PRO_1000117040" description="Transcription antitermination protein NusB">
    <location>
        <begin position="1"/>
        <end position="149"/>
    </location>
</feature>
<reference key="1">
    <citation type="journal article" date="2008" name="J. Bacteriol.">
        <title>Comparative genome sequence analysis of multidrug-resistant Acinetobacter baumannii.</title>
        <authorList>
            <person name="Adams M.D."/>
            <person name="Goglin K."/>
            <person name="Molyneaux N."/>
            <person name="Hujer K.M."/>
            <person name="Lavender H."/>
            <person name="Jamison J.J."/>
            <person name="MacDonald I.J."/>
            <person name="Martin K.M."/>
            <person name="Russo T."/>
            <person name="Campagnari A.A."/>
            <person name="Hujer A.M."/>
            <person name="Bonomo R.A."/>
            <person name="Gill S.R."/>
        </authorList>
    </citation>
    <scope>NUCLEOTIDE SEQUENCE [LARGE SCALE GENOMIC DNA]</scope>
    <source>
        <strain>AB307-0294</strain>
    </source>
</reference>
<comment type="function">
    <text evidence="1">Involved in transcription antitermination. Required for transcription of ribosomal RNA (rRNA) genes. Binds specifically to the boxA antiterminator sequence of the ribosomal RNA (rrn) operons.</text>
</comment>
<comment type="similarity">
    <text evidence="1">Belongs to the NusB family.</text>
</comment>
<evidence type="ECO:0000255" key="1">
    <source>
        <dbReference type="HAMAP-Rule" id="MF_00073"/>
    </source>
</evidence>
<accession>B7GUW2</accession>
<organism>
    <name type="scientific">Acinetobacter baumannii (strain AB307-0294)</name>
    <dbReference type="NCBI Taxonomy" id="557600"/>
    <lineage>
        <taxon>Bacteria</taxon>
        <taxon>Pseudomonadati</taxon>
        <taxon>Pseudomonadota</taxon>
        <taxon>Gammaproteobacteria</taxon>
        <taxon>Moraxellales</taxon>
        <taxon>Moraxellaceae</taxon>
        <taxon>Acinetobacter</taxon>
        <taxon>Acinetobacter calcoaceticus/baumannii complex</taxon>
    </lineage>
</organism>
<keyword id="KW-0694">RNA-binding</keyword>
<keyword id="KW-0804">Transcription</keyword>
<keyword id="KW-0889">Transcription antitermination</keyword>
<keyword id="KW-0805">Transcription regulation</keyword>
<gene>
    <name evidence="1" type="primary">nusB</name>
    <name type="ordered locus">ABBFA_000093</name>
</gene>
<proteinExistence type="inferred from homology"/>
<sequence length="149" mass="17017">MSQTLQAAYAAKRKARRFAVQGIYEWQMSHNPVHEIEARTRAENAMHKVDLNYYHELLTQVIAQHEDLDALLIPVLDREIDALDGVELATLRLGAYELRDHLEIPYRVVLDEAIELAKHFGGADSHKYINGVLDRLSSTLRSAEKQQAK</sequence>
<name>NUSB_ACIB3</name>
<dbReference type="EMBL" id="CP001172">
    <property type="protein sequence ID" value="ACJ58607.1"/>
    <property type="molecule type" value="Genomic_DNA"/>
</dbReference>
<dbReference type="RefSeq" id="WP_000084188.1">
    <property type="nucleotide sequence ID" value="NZ_CP001172.1"/>
</dbReference>
<dbReference type="SMR" id="B7GUW2"/>
<dbReference type="GeneID" id="92895632"/>
<dbReference type="HOGENOM" id="CLU_087843_4_1_6"/>
<dbReference type="Proteomes" id="UP000006924">
    <property type="component" value="Chromosome"/>
</dbReference>
<dbReference type="GO" id="GO:0005829">
    <property type="term" value="C:cytosol"/>
    <property type="evidence" value="ECO:0007669"/>
    <property type="project" value="TreeGrafter"/>
</dbReference>
<dbReference type="GO" id="GO:0003723">
    <property type="term" value="F:RNA binding"/>
    <property type="evidence" value="ECO:0007669"/>
    <property type="project" value="UniProtKB-UniRule"/>
</dbReference>
<dbReference type="GO" id="GO:0006353">
    <property type="term" value="P:DNA-templated transcription termination"/>
    <property type="evidence" value="ECO:0007669"/>
    <property type="project" value="UniProtKB-UniRule"/>
</dbReference>
<dbReference type="GO" id="GO:0031564">
    <property type="term" value="P:transcription antitermination"/>
    <property type="evidence" value="ECO:0007669"/>
    <property type="project" value="UniProtKB-KW"/>
</dbReference>
<dbReference type="Gene3D" id="1.10.940.10">
    <property type="entry name" value="NusB-like"/>
    <property type="match status" value="1"/>
</dbReference>
<dbReference type="HAMAP" id="MF_00073">
    <property type="entry name" value="NusB"/>
    <property type="match status" value="1"/>
</dbReference>
<dbReference type="InterPro" id="IPR035926">
    <property type="entry name" value="NusB-like_sf"/>
</dbReference>
<dbReference type="InterPro" id="IPR011605">
    <property type="entry name" value="NusB_fam"/>
</dbReference>
<dbReference type="InterPro" id="IPR006027">
    <property type="entry name" value="NusB_RsmB_TIM44"/>
</dbReference>
<dbReference type="NCBIfam" id="TIGR01951">
    <property type="entry name" value="nusB"/>
    <property type="match status" value="1"/>
</dbReference>
<dbReference type="PANTHER" id="PTHR11078:SF3">
    <property type="entry name" value="ANTITERMINATION NUSB DOMAIN-CONTAINING PROTEIN"/>
    <property type="match status" value="1"/>
</dbReference>
<dbReference type="PANTHER" id="PTHR11078">
    <property type="entry name" value="N UTILIZATION SUBSTANCE PROTEIN B-RELATED"/>
    <property type="match status" value="1"/>
</dbReference>
<dbReference type="Pfam" id="PF01029">
    <property type="entry name" value="NusB"/>
    <property type="match status" value="1"/>
</dbReference>
<dbReference type="SUPFAM" id="SSF48013">
    <property type="entry name" value="NusB-like"/>
    <property type="match status" value="1"/>
</dbReference>